<dbReference type="EC" id="6.3.2.-" evidence="1"/>
<dbReference type="EMBL" id="CP000686">
    <property type="protein sequence ID" value="ABQ89208.1"/>
    <property type="molecule type" value="Genomic_DNA"/>
</dbReference>
<dbReference type="RefSeq" id="WP_011955562.1">
    <property type="nucleotide sequence ID" value="NC_009523.1"/>
</dbReference>
<dbReference type="SMR" id="A5URF5"/>
<dbReference type="STRING" id="357808.RoseRS_0794"/>
<dbReference type="KEGG" id="rrs:RoseRS_0794"/>
<dbReference type="eggNOG" id="COG0769">
    <property type="taxonomic scope" value="Bacteria"/>
</dbReference>
<dbReference type="HOGENOM" id="CLU_022291_4_1_0"/>
<dbReference type="OrthoDB" id="9800958at2"/>
<dbReference type="UniPathway" id="UPA00219"/>
<dbReference type="Proteomes" id="UP000006554">
    <property type="component" value="Chromosome"/>
</dbReference>
<dbReference type="GO" id="GO:0005737">
    <property type="term" value="C:cytoplasm"/>
    <property type="evidence" value="ECO:0007669"/>
    <property type="project" value="UniProtKB-SubCell"/>
</dbReference>
<dbReference type="GO" id="GO:0016881">
    <property type="term" value="F:acid-amino acid ligase activity"/>
    <property type="evidence" value="ECO:0007669"/>
    <property type="project" value="UniProtKB-UniRule"/>
</dbReference>
<dbReference type="GO" id="GO:0005524">
    <property type="term" value="F:ATP binding"/>
    <property type="evidence" value="ECO:0007669"/>
    <property type="project" value="UniProtKB-UniRule"/>
</dbReference>
<dbReference type="GO" id="GO:0000287">
    <property type="term" value="F:magnesium ion binding"/>
    <property type="evidence" value="ECO:0007669"/>
    <property type="project" value="UniProtKB-UniRule"/>
</dbReference>
<dbReference type="GO" id="GO:0051301">
    <property type="term" value="P:cell division"/>
    <property type="evidence" value="ECO:0007669"/>
    <property type="project" value="UniProtKB-KW"/>
</dbReference>
<dbReference type="GO" id="GO:0071555">
    <property type="term" value="P:cell wall organization"/>
    <property type="evidence" value="ECO:0007669"/>
    <property type="project" value="UniProtKB-KW"/>
</dbReference>
<dbReference type="GO" id="GO:0009252">
    <property type="term" value="P:peptidoglycan biosynthetic process"/>
    <property type="evidence" value="ECO:0007669"/>
    <property type="project" value="UniProtKB-UniRule"/>
</dbReference>
<dbReference type="GO" id="GO:0008360">
    <property type="term" value="P:regulation of cell shape"/>
    <property type="evidence" value="ECO:0007669"/>
    <property type="project" value="UniProtKB-KW"/>
</dbReference>
<dbReference type="Gene3D" id="3.90.190.20">
    <property type="entry name" value="Mur ligase, C-terminal domain"/>
    <property type="match status" value="1"/>
</dbReference>
<dbReference type="Gene3D" id="3.40.1190.10">
    <property type="entry name" value="Mur-like, catalytic domain"/>
    <property type="match status" value="1"/>
</dbReference>
<dbReference type="Gene3D" id="3.40.1390.10">
    <property type="entry name" value="MurE/MurF, N-terminal domain"/>
    <property type="match status" value="1"/>
</dbReference>
<dbReference type="HAMAP" id="MF_00208">
    <property type="entry name" value="MurE"/>
    <property type="match status" value="1"/>
</dbReference>
<dbReference type="InterPro" id="IPR036565">
    <property type="entry name" value="Mur-like_cat_sf"/>
</dbReference>
<dbReference type="InterPro" id="IPR004101">
    <property type="entry name" value="Mur_ligase_C"/>
</dbReference>
<dbReference type="InterPro" id="IPR036615">
    <property type="entry name" value="Mur_ligase_C_dom_sf"/>
</dbReference>
<dbReference type="InterPro" id="IPR013221">
    <property type="entry name" value="Mur_ligase_cen"/>
</dbReference>
<dbReference type="InterPro" id="IPR000713">
    <property type="entry name" value="Mur_ligase_N"/>
</dbReference>
<dbReference type="InterPro" id="IPR035911">
    <property type="entry name" value="MurE/MurF_N"/>
</dbReference>
<dbReference type="InterPro" id="IPR005761">
    <property type="entry name" value="UDP-N-AcMur-Glu-dNH2Pim_ligase"/>
</dbReference>
<dbReference type="NCBIfam" id="TIGR01085">
    <property type="entry name" value="murE"/>
    <property type="match status" value="1"/>
</dbReference>
<dbReference type="NCBIfam" id="NF001126">
    <property type="entry name" value="PRK00139.1-4"/>
    <property type="match status" value="1"/>
</dbReference>
<dbReference type="PANTHER" id="PTHR23135">
    <property type="entry name" value="MUR LIGASE FAMILY MEMBER"/>
    <property type="match status" value="1"/>
</dbReference>
<dbReference type="PANTHER" id="PTHR23135:SF4">
    <property type="entry name" value="UDP-N-ACETYLMURAMOYL-L-ALANYL-D-GLUTAMATE--2,6-DIAMINOPIMELATE LIGASE MURE HOMOLOG, CHLOROPLASTIC"/>
    <property type="match status" value="1"/>
</dbReference>
<dbReference type="Pfam" id="PF01225">
    <property type="entry name" value="Mur_ligase"/>
    <property type="match status" value="1"/>
</dbReference>
<dbReference type="Pfam" id="PF02875">
    <property type="entry name" value="Mur_ligase_C"/>
    <property type="match status" value="1"/>
</dbReference>
<dbReference type="Pfam" id="PF08245">
    <property type="entry name" value="Mur_ligase_M"/>
    <property type="match status" value="1"/>
</dbReference>
<dbReference type="SUPFAM" id="SSF53623">
    <property type="entry name" value="MurD-like peptide ligases, catalytic domain"/>
    <property type="match status" value="1"/>
</dbReference>
<dbReference type="SUPFAM" id="SSF53244">
    <property type="entry name" value="MurD-like peptide ligases, peptide-binding domain"/>
    <property type="match status" value="1"/>
</dbReference>
<dbReference type="SUPFAM" id="SSF63418">
    <property type="entry name" value="MurE/MurF N-terminal domain"/>
    <property type="match status" value="1"/>
</dbReference>
<comment type="function">
    <text evidence="1">Catalyzes the addition of an amino acid to the nucleotide precursor UDP-N-acetylmuramoyl-L-alanyl-D-glutamate (UMAG) in the biosynthesis of bacterial cell-wall peptidoglycan.</text>
</comment>
<comment type="pathway">
    <text evidence="1">Cell wall biogenesis; peptidoglycan biosynthesis.</text>
</comment>
<comment type="subcellular location">
    <subcellularLocation>
        <location evidence="1">Cytoplasm</location>
    </subcellularLocation>
</comment>
<comment type="PTM">
    <text evidence="1">Carboxylation is probably crucial for Mg(2+) binding and, consequently, for the gamma-phosphate positioning of ATP.</text>
</comment>
<comment type="similarity">
    <text evidence="1">Belongs to the MurCDEF family. MurE subfamily.</text>
</comment>
<proteinExistence type="inferred from homology"/>
<name>MURE_ROSS1</name>
<organism>
    <name type="scientific">Roseiflexus sp. (strain RS-1)</name>
    <dbReference type="NCBI Taxonomy" id="357808"/>
    <lineage>
        <taxon>Bacteria</taxon>
        <taxon>Bacillati</taxon>
        <taxon>Chloroflexota</taxon>
        <taxon>Chloroflexia</taxon>
        <taxon>Chloroflexales</taxon>
        <taxon>Roseiflexineae</taxon>
        <taxon>Roseiflexaceae</taxon>
        <taxon>Roseiflexus</taxon>
    </lineage>
</organism>
<protein>
    <recommendedName>
        <fullName evidence="1">UDP-N-acetylmuramyl-tripeptide synthetase</fullName>
        <ecNumber evidence="1">6.3.2.-</ecNumber>
    </recommendedName>
    <alternativeName>
        <fullName evidence="1">UDP-MurNAc-tripeptide synthetase</fullName>
    </alternativeName>
</protein>
<accession>A5URF5</accession>
<feature type="chain" id="PRO_1000071733" description="UDP-N-acetylmuramyl-tripeptide synthetase">
    <location>
        <begin position="1"/>
        <end position="509"/>
    </location>
</feature>
<feature type="binding site" evidence="1">
    <location>
        <position position="30"/>
    </location>
    <ligand>
        <name>UDP-N-acetyl-alpha-D-muramoyl-L-alanyl-D-glutamate</name>
        <dbReference type="ChEBI" id="CHEBI:83900"/>
    </ligand>
</feature>
<feature type="binding site" evidence="1">
    <location>
        <begin position="111"/>
        <end position="117"/>
    </location>
    <ligand>
        <name>ATP</name>
        <dbReference type="ChEBI" id="CHEBI:30616"/>
    </ligand>
</feature>
<feature type="binding site" evidence="1">
    <location>
        <begin position="155"/>
        <end position="156"/>
    </location>
    <ligand>
        <name>UDP-N-acetyl-alpha-D-muramoyl-L-alanyl-D-glutamate</name>
        <dbReference type="ChEBI" id="CHEBI:83900"/>
    </ligand>
</feature>
<feature type="binding site" evidence="1">
    <location>
        <position position="182"/>
    </location>
    <ligand>
        <name>UDP-N-acetyl-alpha-D-muramoyl-L-alanyl-D-glutamate</name>
        <dbReference type="ChEBI" id="CHEBI:83900"/>
    </ligand>
</feature>
<feature type="binding site" evidence="1">
    <location>
        <position position="192"/>
    </location>
    <ligand>
        <name>UDP-N-acetyl-alpha-D-muramoyl-L-alanyl-D-glutamate</name>
        <dbReference type="ChEBI" id="CHEBI:83900"/>
    </ligand>
</feature>
<feature type="modified residue" description="N6-carboxylysine" evidence="1">
    <location>
        <position position="224"/>
    </location>
</feature>
<gene>
    <name evidence="1" type="primary">murE</name>
    <name type="ordered locus">RoseRS_0794</name>
</gene>
<reference key="1">
    <citation type="submission" date="2007-04" db="EMBL/GenBank/DDBJ databases">
        <title>Complete sequence of Roseiflexus sp. RS-1.</title>
        <authorList>
            <consortium name="US DOE Joint Genome Institute"/>
            <person name="Copeland A."/>
            <person name="Lucas S."/>
            <person name="Lapidus A."/>
            <person name="Barry K."/>
            <person name="Detter J.C."/>
            <person name="Glavina del Rio T."/>
            <person name="Hammon N."/>
            <person name="Israni S."/>
            <person name="Dalin E."/>
            <person name="Tice H."/>
            <person name="Pitluck S."/>
            <person name="Chertkov O."/>
            <person name="Brettin T."/>
            <person name="Bruce D."/>
            <person name="Han C."/>
            <person name="Schmutz J."/>
            <person name="Larimer F."/>
            <person name="Land M."/>
            <person name="Hauser L."/>
            <person name="Kyrpides N."/>
            <person name="Mikhailova N."/>
            <person name="Bryant D.A."/>
            <person name="Richardson P."/>
        </authorList>
    </citation>
    <scope>NUCLEOTIDE SEQUENCE [LARGE SCALE GENOMIC DNA]</scope>
    <source>
        <strain>RS-1</strain>
    </source>
</reference>
<keyword id="KW-0067">ATP-binding</keyword>
<keyword id="KW-0131">Cell cycle</keyword>
<keyword id="KW-0132">Cell division</keyword>
<keyword id="KW-0133">Cell shape</keyword>
<keyword id="KW-0961">Cell wall biogenesis/degradation</keyword>
<keyword id="KW-0963">Cytoplasm</keyword>
<keyword id="KW-0436">Ligase</keyword>
<keyword id="KW-0547">Nucleotide-binding</keyword>
<keyword id="KW-0573">Peptidoglycan synthesis</keyword>
<evidence type="ECO:0000255" key="1">
    <source>
        <dbReference type="HAMAP-Rule" id="MF_00208"/>
    </source>
</evidence>
<sequence length="509" mass="55197">MRLHEILKHLCEPAHMPPVNPEIAGVVYDSRAVTPGALFVAYRGFHTDGHAYIPQALERGAAAVVYEDPAWDGRVPVPALRVPNARVALAPLAAAFYGHPGRRMRIVGVTGTDGKTTTTFLTSVALEAGGAITGLMGTVDFKIGERMWTNDSRQSTPEAPEVQALLRDMAEAGCSYAVIEATSHALSARWNRLAGSAFDIAVFTNVTQEHLDFHGTVEQYRRDKARLFEMLAEFNDAAAPFKQRKIAVVNADDPHHRMFLDAAPVSAERLTYAVHAHADVRAEDVRSTRDGLRFRVTTPWGAADARLRLTGDFNVWNALAALTVACAEGVPLERCLAALERVPGVRGRMERIEAGQPFTVLVDYAHTPGAFEKLFRIVRPLTEGQVIAVFGSAGERDRAKRPLQGEIAGRFCDLVIVTDEDPRLEDRAAIIAEIAAGAEAVGKRIGETCLCIPDRALAIRTAFAYARPGDIVLLLGKGHEGSIIYGTTPVPWDEAAEARRALAELGYGG</sequence>